<comment type="function">
    <text evidence="1">DNA-dependent RNA polymerase catalyzes the transcription of DNA into RNA using the four ribonucleoside triphosphates as substrates. Component of RNA polymerase II which synthesizes mRNA precursors and many functional non-coding RNAs. Pol II is the central component of the basal RNA polymerase II transcription machinery. It is composed of mobile elements that move relative to each other. RPB11 is part of the core element with the central large cleft (By similarity).</text>
</comment>
<comment type="subunit">
    <text evidence="1">Component of the RNA polymerase II (Pol II) complex consisting of 12 subunits.</text>
</comment>
<comment type="subcellular location">
    <subcellularLocation>
        <location evidence="1">Nucleus</location>
    </subcellularLocation>
</comment>
<comment type="similarity">
    <text evidence="2">Belongs to the archaeal Rpo11/eukaryotic RPB11/RPC19 RNA polymerase subunit family.</text>
</comment>
<feature type="chain" id="PRO_0000232461" description="DNA-directed RNA polymerase II subunit RPB11">
    <location>
        <begin position="1"/>
        <end position="117"/>
    </location>
</feature>
<sequence length="117" mass="13527">MNAPPTFESFLLYEGEKKIIKELDMKVPNAAIFTVNKEDHTLGNMIRNQLLKDPNVLFAGYKLPHPLEHKFVLRIQTTSEYSPHEAFMNAITDLLSELSLFEERFREAMKEKKEGGD</sequence>
<name>RPB11_ANOGA</name>
<organism>
    <name type="scientific">Anopheles gambiae</name>
    <name type="common">African malaria mosquito</name>
    <dbReference type="NCBI Taxonomy" id="7165"/>
    <lineage>
        <taxon>Eukaryota</taxon>
        <taxon>Metazoa</taxon>
        <taxon>Ecdysozoa</taxon>
        <taxon>Arthropoda</taxon>
        <taxon>Hexapoda</taxon>
        <taxon>Insecta</taxon>
        <taxon>Pterygota</taxon>
        <taxon>Neoptera</taxon>
        <taxon>Endopterygota</taxon>
        <taxon>Diptera</taxon>
        <taxon>Nematocera</taxon>
        <taxon>Culicoidea</taxon>
        <taxon>Culicidae</taxon>
        <taxon>Anophelinae</taxon>
        <taxon>Anopheles</taxon>
    </lineage>
</organism>
<reference key="1">
    <citation type="journal article" date="2002" name="Science">
        <title>The genome sequence of the malaria mosquito Anopheles gambiae.</title>
        <authorList>
            <person name="Holt R.A."/>
            <person name="Subramanian G.M."/>
            <person name="Halpern A."/>
            <person name="Sutton G.G."/>
            <person name="Charlab R."/>
            <person name="Nusskern D.R."/>
            <person name="Wincker P."/>
            <person name="Clark A.G."/>
            <person name="Ribeiro J.M.C."/>
            <person name="Wides R."/>
            <person name="Salzberg S.L."/>
            <person name="Loftus B.J."/>
            <person name="Yandell M.D."/>
            <person name="Majoros W.H."/>
            <person name="Rusch D.B."/>
            <person name="Lai Z."/>
            <person name="Kraft C.L."/>
            <person name="Abril J.F."/>
            <person name="Anthouard V."/>
            <person name="Arensburger P."/>
            <person name="Atkinson P.W."/>
            <person name="Baden H."/>
            <person name="de Berardinis V."/>
            <person name="Baldwin D."/>
            <person name="Benes V."/>
            <person name="Biedler J."/>
            <person name="Blass C."/>
            <person name="Bolanos R."/>
            <person name="Boscus D."/>
            <person name="Barnstead M."/>
            <person name="Cai S."/>
            <person name="Center A."/>
            <person name="Chaturverdi K."/>
            <person name="Christophides G.K."/>
            <person name="Chrystal M.A.M."/>
            <person name="Clamp M."/>
            <person name="Cravchik A."/>
            <person name="Curwen V."/>
            <person name="Dana A."/>
            <person name="Delcher A."/>
            <person name="Dew I."/>
            <person name="Evans C.A."/>
            <person name="Flanigan M."/>
            <person name="Grundschober-Freimoser A."/>
            <person name="Friedli L."/>
            <person name="Gu Z."/>
            <person name="Guan P."/>
            <person name="Guigo R."/>
            <person name="Hillenmeyer M.E."/>
            <person name="Hladun S.L."/>
            <person name="Hogan J.R."/>
            <person name="Hong Y.S."/>
            <person name="Hoover J."/>
            <person name="Jaillon O."/>
            <person name="Ke Z."/>
            <person name="Kodira C.D."/>
            <person name="Kokoza E."/>
            <person name="Koutsos A."/>
            <person name="Letunic I."/>
            <person name="Levitsky A.A."/>
            <person name="Liang Y."/>
            <person name="Lin J.-J."/>
            <person name="Lobo N.F."/>
            <person name="Lopez J.R."/>
            <person name="Malek J.A."/>
            <person name="McIntosh T.C."/>
            <person name="Meister S."/>
            <person name="Miller J.R."/>
            <person name="Mobarry C."/>
            <person name="Mongin E."/>
            <person name="Murphy S.D."/>
            <person name="O'Brochta D.A."/>
            <person name="Pfannkoch C."/>
            <person name="Qi R."/>
            <person name="Regier M.A."/>
            <person name="Remington K."/>
            <person name="Shao H."/>
            <person name="Sharakhova M.V."/>
            <person name="Sitter C.D."/>
            <person name="Shetty J."/>
            <person name="Smith T.J."/>
            <person name="Strong R."/>
            <person name="Sun J."/>
            <person name="Thomasova D."/>
            <person name="Ton L.Q."/>
            <person name="Topalis P."/>
            <person name="Tu Z.J."/>
            <person name="Unger M.F."/>
            <person name="Walenz B."/>
            <person name="Wang A.H."/>
            <person name="Wang J."/>
            <person name="Wang M."/>
            <person name="Wang X."/>
            <person name="Woodford K.J."/>
            <person name="Wortman J.R."/>
            <person name="Wu M."/>
            <person name="Yao A."/>
            <person name="Zdobnov E.M."/>
            <person name="Zhang H."/>
            <person name="Zhao Q."/>
            <person name="Zhao S."/>
            <person name="Zhu S.C."/>
            <person name="Zhimulev I."/>
            <person name="Coluzzi M."/>
            <person name="della Torre A."/>
            <person name="Roth C.W."/>
            <person name="Louis C."/>
            <person name="Kalush F."/>
            <person name="Mural R.J."/>
            <person name="Myers E.W."/>
            <person name="Adams M.D."/>
            <person name="Smith H.O."/>
            <person name="Broder S."/>
            <person name="Gardner M.J."/>
            <person name="Fraser C.M."/>
            <person name="Birney E."/>
            <person name="Bork P."/>
            <person name="Brey P.T."/>
            <person name="Venter J.C."/>
            <person name="Weissenbach J."/>
            <person name="Kafatos F.C."/>
            <person name="Collins F.H."/>
            <person name="Hoffman S.L."/>
        </authorList>
    </citation>
    <scope>NUCLEOTIDE SEQUENCE [LARGE SCALE GENOMIC DNA]</scope>
    <source>
        <strain>PEST</strain>
    </source>
</reference>
<protein>
    <recommendedName>
        <fullName>DNA-directed RNA polymerase II subunit RPB11</fullName>
        <shortName>RNA polymerase II subunit B11</shortName>
    </recommendedName>
    <alternativeName>
        <fullName>DNA-directed RNA polymerase II subunit J</fullName>
    </alternativeName>
</protein>
<proteinExistence type="inferred from homology"/>
<keyword id="KW-0240">DNA-directed RNA polymerase</keyword>
<keyword id="KW-0539">Nucleus</keyword>
<keyword id="KW-1185">Reference proteome</keyword>
<keyword id="KW-0804">Transcription</keyword>
<accession>Q7PVQ9</accession>
<gene>
    <name type="primary">Rpb11</name>
    <name type="ORF">AGAP009209</name>
</gene>
<evidence type="ECO:0000250" key="1"/>
<evidence type="ECO:0000305" key="2"/>
<dbReference type="EMBL" id="AAAB01008984">
    <property type="protein sequence ID" value="EAA14713.2"/>
    <property type="molecule type" value="Genomic_DNA"/>
</dbReference>
<dbReference type="SMR" id="Q7PVQ9"/>
<dbReference type="FunCoup" id="Q7PVQ9">
    <property type="interactions" value="1073"/>
</dbReference>
<dbReference type="STRING" id="7165.Q7PVQ9"/>
<dbReference type="PaxDb" id="7165-AGAP009209-PA"/>
<dbReference type="EnsemblMetazoa" id="AGAP009209-RA">
    <property type="protein sequence ID" value="AGAP009209-PA"/>
    <property type="gene ID" value="AGAP009209"/>
</dbReference>
<dbReference type="GeneID" id="1280168"/>
<dbReference type="KEGG" id="aga:1280168"/>
<dbReference type="CTD" id="136026006"/>
<dbReference type="VEuPathDB" id="VectorBase:AGAMI1_005757"/>
<dbReference type="VEuPathDB" id="VectorBase:AGAP009209"/>
<dbReference type="eggNOG" id="KOG4392">
    <property type="taxonomic scope" value="Eukaryota"/>
</dbReference>
<dbReference type="HOGENOM" id="CLU_090381_2_2_1"/>
<dbReference type="InParanoid" id="Q7PVQ9"/>
<dbReference type="OMA" id="MNAPSRY"/>
<dbReference type="PhylomeDB" id="Q7PVQ9"/>
<dbReference type="Proteomes" id="UP000007062">
    <property type="component" value="Chromosome 3R"/>
</dbReference>
<dbReference type="GO" id="GO:0005665">
    <property type="term" value="C:RNA polymerase II, core complex"/>
    <property type="evidence" value="ECO:0000318"/>
    <property type="project" value="GO_Central"/>
</dbReference>
<dbReference type="GO" id="GO:0003677">
    <property type="term" value="F:DNA binding"/>
    <property type="evidence" value="ECO:0007669"/>
    <property type="project" value="InterPro"/>
</dbReference>
<dbReference type="GO" id="GO:0003899">
    <property type="term" value="F:DNA-directed RNA polymerase activity"/>
    <property type="evidence" value="ECO:0007669"/>
    <property type="project" value="InterPro"/>
</dbReference>
<dbReference type="GO" id="GO:0046983">
    <property type="term" value="F:protein dimerization activity"/>
    <property type="evidence" value="ECO:0007669"/>
    <property type="project" value="InterPro"/>
</dbReference>
<dbReference type="GO" id="GO:0006366">
    <property type="term" value="P:transcription by RNA polymerase II"/>
    <property type="evidence" value="ECO:0000318"/>
    <property type="project" value="GO_Central"/>
</dbReference>
<dbReference type="CDD" id="cd06926">
    <property type="entry name" value="RNAP_II_RPB11"/>
    <property type="match status" value="1"/>
</dbReference>
<dbReference type="FunFam" id="3.30.1360.10:FF:000003">
    <property type="entry name" value="DNA-directed RNA polymerase II subunit RPB11"/>
    <property type="match status" value="1"/>
</dbReference>
<dbReference type="Gene3D" id="3.30.1360.10">
    <property type="entry name" value="RNA polymerase, RBP11-like subunit"/>
    <property type="match status" value="1"/>
</dbReference>
<dbReference type="HAMAP" id="MF_00261">
    <property type="entry name" value="RNApol_arch_Rpo11"/>
    <property type="match status" value="1"/>
</dbReference>
<dbReference type="InterPro" id="IPR037685">
    <property type="entry name" value="RBP11"/>
</dbReference>
<dbReference type="InterPro" id="IPR036603">
    <property type="entry name" value="RBP11-like"/>
</dbReference>
<dbReference type="InterPro" id="IPR009025">
    <property type="entry name" value="RBP11-like_dimer"/>
</dbReference>
<dbReference type="InterPro" id="IPR008193">
    <property type="entry name" value="RNA_pol_Rpb11_13-16kDa_CS"/>
</dbReference>
<dbReference type="InterPro" id="IPR022905">
    <property type="entry name" value="Rpo11-like"/>
</dbReference>
<dbReference type="PANTHER" id="PTHR13946">
    <property type="entry name" value="DNA-DIRECTED RNA POLYMERASE I,II,III"/>
    <property type="match status" value="1"/>
</dbReference>
<dbReference type="PANTHER" id="PTHR13946:SF16">
    <property type="entry name" value="DNA-DIRECTED RNA POLYMERASE II SUBUNIT RPB11"/>
    <property type="match status" value="1"/>
</dbReference>
<dbReference type="Pfam" id="PF13656">
    <property type="entry name" value="RNA_pol_L_2"/>
    <property type="match status" value="1"/>
</dbReference>
<dbReference type="SUPFAM" id="SSF55257">
    <property type="entry name" value="RBP11-like subunits of RNA polymerase"/>
    <property type="match status" value="1"/>
</dbReference>
<dbReference type="PROSITE" id="PS01154">
    <property type="entry name" value="RNA_POL_L_13KD"/>
    <property type="match status" value="1"/>
</dbReference>